<proteinExistence type="inferred from homology"/>
<name>EF2_KORCO</name>
<organism>
    <name type="scientific">Korarchaeum cryptofilum (strain OPF8)</name>
    <dbReference type="NCBI Taxonomy" id="374847"/>
    <lineage>
        <taxon>Archaea</taxon>
        <taxon>Thermoproteota</taxon>
        <taxon>Candidatus Korarchaeia</taxon>
        <taxon>Candidatus Korarchaeales</taxon>
        <taxon>Candidatus Korarchaeaceae</taxon>
        <taxon>Candidatus Korarchaeum</taxon>
    </lineage>
</organism>
<feature type="chain" id="PRO_0000408960" description="Elongation factor 2">
    <location>
        <begin position="1"/>
        <end position="739"/>
    </location>
</feature>
<feature type="domain" description="tr-type G">
    <location>
        <begin position="19"/>
        <end position="261"/>
    </location>
</feature>
<feature type="binding site" evidence="1">
    <location>
        <begin position="28"/>
        <end position="35"/>
    </location>
    <ligand>
        <name>GTP</name>
        <dbReference type="ChEBI" id="CHEBI:37565"/>
    </ligand>
</feature>
<feature type="binding site" evidence="1">
    <location>
        <begin position="94"/>
        <end position="98"/>
    </location>
    <ligand>
        <name>GTP</name>
        <dbReference type="ChEBI" id="CHEBI:37565"/>
    </ligand>
</feature>
<feature type="binding site" evidence="1">
    <location>
        <begin position="148"/>
        <end position="151"/>
    </location>
    <ligand>
        <name>GTP</name>
        <dbReference type="ChEBI" id="CHEBI:37565"/>
    </ligand>
</feature>
<feature type="modified residue" description="Diphthamide" evidence="1">
    <location>
        <position position="603"/>
    </location>
</feature>
<reference key="1">
    <citation type="journal article" date="2008" name="Proc. Natl. Acad. Sci. U.S.A.">
        <title>A korarchaeal genome reveals new insights into the evolution of the Archaea.</title>
        <authorList>
            <person name="Elkins J.G."/>
            <person name="Podar M."/>
            <person name="Graham D.E."/>
            <person name="Makarova K.S."/>
            <person name="Wolf Y."/>
            <person name="Randau L."/>
            <person name="Hedlund B.P."/>
            <person name="Brochier-Armanet C."/>
            <person name="Kunin V."/>
            <person name="Anderson I."/>
            <person name="Lapidus A."/>
            <person name="Goltsman E."/>
            <person name="Barry K."/>
            <person name="Koonin E.V."/>
            <person name="Hugenholtz P."/>
            <person name="Kyrpides N."/>
            <person name="Wanner G."/>
            <person name="Richardson P."/>
            <person name="Keller M."/>
            <person name="Stetter K.O."/>
        </authorList>
    </citation>
    <scope>NUCLEOTIDE SEQUENCE [LARGE SCALE GENOMIC DNA]</scope>
    <source>
        <strain>OPF8</strain>
    </source>
</reference>
<comment type="function">
    <text evidence="1">Catalyzes the GTP-dependent ribosomal translocation step during translation elongation. During this step, the ribosome changes from the pre-translocational (PRE) to the post-translocational (POST) state as the newly formed A-site-bound peptidyl-tRNA and P-site-bound deacylated tRNA move to the P and E sites, respectively. Catalyzes the coordinated movement of the two tRNA molecules, the mRNA and conformational changes in the ribosome.</text>
</comment>
<comment type="subcellular location">
    <subcellularLocation>
        <location evidence="1">Cytoplasm</location>
    </subcellularLocation>
</comment>
<comment type="similarity">
    <text evidence="1">Belongs to the TRAFAC class translation factor GTPase superfamily. Classic translation factor GTPase family. EF-G/EF-2 subfamily.</text>
</comment>
<accession>B1L7Q0</accession>
<dbReference type="EMBL" id="CP000968">
    <property type="protein sequence ID" value="ACB06877.1"/>
    <property type="molecule type" value="Genomic_DNA"/>
</dbReference>
<dbReference type="RefSeq" id="WP_012308774.1">
    <property type="nucleotide sequence ID" value="NC_010482.1"/>
</dbReference>
<dbReference type="SMR" id="B1L7Q0"/>
<dbReference type="FunCoup" id="B1L7Q0">
    <property type="interactions" value="180"/>
</dbReference>
<dbReference type="STRING" id="374847.Kcr_0117"/>
<dbReference type="EnsemblBacteria" id="ACB06877">
    <property type="protein sequence ID" value="ACB06877"/>
    <property type="gene ID" value="Kcr_0117"/>
</dbReference>
<dbReference type="GeneID" id="6093406"/>
<dbReference type="KEGG" id="kcr:Kcr_0117"/>
<dbReference type="eggNOG" id="arCOG01559">
    <property type="taxonomic scope" value="Archaea"/>
</dbReference>
<dbReference type="HOGENOM" id="CLU_002794_11_1_2"/>
<dbReference type="InParanoid" id="B1L7Q0"/>
<dbReference type="OrthoDB" id="6290at2157"/>
<dbReference type="PhylomeDB" id="B1L7Q0"/>
<dbReference type="Proteomes" id="UP000001686">
    <property type="component" value="Chromosome"/>
</dbReference>
<dbReference type="GO" id="GO:0005829">
    <property type="term" value="C:cytosol"/>
    <property type="evidence" value="ECO:0000318"/>
    <property type="project" value="GO_Central"/>
</dbReference>
<dbReference type="GO" id="GO:1990904">
    <property type="term" value="C:ribonucleoprotein complex"/>
    <property type="evidence" value="ECO:0000318"/>
    <property type="project" value="GO_Central"/>
</dbReference>
<dbReference type="GO" id="GO:0005525">
    <property type="term" value="F:GTP binding"/>
    <property type="evidence" value="ECO:0007669"/>
    <property type="project" value="UniProtKB-UniRule"/>
</dbReference>
<dbReference type="GO" id="GO:0003924">
    <property type="term" value="F:GTPase activity"/>
    <property type="evidence" value="ECO:0000318"/>
    <property type="project" value="GO_Central"/>
</dbReference>
<dbReference type="GO" id="GO:0003746">
    <property type="term" value="F:translation elongation factor activity"/>
    <property type="evidence" value="ECO:0000318"/>
    <property type="project" value="GO_Central"/>
</dbReference>
<dbReference type="GO" id="GO:0006414">
    <property type="term" value="P:translational elongation"/>
    <property type="evidence" value="ECO:0000318"/>
    <property type="project" value="GO_Central"/>
</dbReference>
<dbReference type="CDD" id="cd01681">
    <property type="entry name" value="aeEF2_snRNP_like_IV"/>
    <property type="match status" value="1"/>
</dbReference>
<dbReference type="CDD" id="cd01885">
    <property type="entry name" value="EF2"/>
    <property type="match status" value="1"/>
</dbReference>
<dbReference type="CDD" id="cd16268">
    <property type="entry name" value="EF2_II"/>
    <property type="match status" value="1"/>
</dbReference>
<dbReference type="CDD" id="cd16261">
    <property type="entry name" value="EF2_snRNP_III"/>
    <property type="match status" value="1"/>
</dbReference>
<dbReference type="CDD" id="cd01514">
    <property type="entry name" value="Elongation_Factor_C"/>
    <property type="match status" value="1"/>
</dbReference>
<dbReference type="FunFam" id="3.30.230.10:FF:000009">
    <property type="entry name" value="116 kDa U5 small nuclear ribonucleoprotein component"/>
    <property type="match status" value="1"/>
</dbReference>
<dbReference type="FunFam" id="3.30.70.870:FF:000002">
    <property type="entry name" value="Translation elongation factor 2"/>
    <property type="match status" value="1"/>
</dbReference>
<dbReference type="Gene3D" id="3.30.230.10">
    <property type="match status" value="1"/>
</dbReference>
<dbReference type="Gene3D" id="3.30.70.240">
    <property type="match status" value="1"/>
</dbReference>
<dbReference type="Gene3D" id="3.30.70.870">
    <property type="entry name" value="Elongation Factor G (Translational Gtpase), domain 3"/>
    <property type="match status" value="1"/>
</dbReference>
<dbReference type="Gene3D" id="3.40.50.300">
    <property type="entry name" value="P-loop containing nucleotide triphosphate hydrolases"/>
    <property type="match status" value="1"/>
</dbReference>
<dbReference type="Gene3D" id="2.40.30.10">
    <property type="entry name" value="Translation factors"/>
    <property type="match status" value="1"/>
</dbReference>
<dbReference type="HAMAP" id="MF_00054_A">
    <property type="entry name" value="EF_G_EF_2_A"/>
    <property type="match status" value="1"/>
</dbReference>
<dbReference type="InterPro" id="IPR041095">
    <property type="entry name" value="EFG_II"/>
</dbReference>
<dbReference type="InterPro" id="IPR035647">
    <property type="entry name" value="EFG_III/V"/>
</dbReference>
<dbReference type="InterPro" id="IPR000640">
    <property type="entry name" value="EFG_V-like"/>
</dbReference>
<dbReference type="InterPro" id="IPR004161">
    <property type="entry name" value="EFTu-like_2"/>
</dbReference>
<dbReference type="InterPro" id="IPR031157">
    <property type="entry name" value="G_TR_CS"/>
</dbReference>
<dbReference type="InterPro" id="IPR027417">
    <property type="entry name" value="P-loop_NTPase"/>
</dbReference>
<dbReference type="InterPro" id="IPR020568">
    <property type="entry name" value="Ribosomal_Su5_D2-typ_SF"/>
</dbReference>
<dbReference type="InterPro" id="IPR014721">
    <property type="entry name" value="Ribsml_uS5_D2-typ_fold_subgr"/>
</dbReference>
<dbReference type="InterPro" id="IPR005225">
    <property type="entry name" value="Small_GTP-bd"/>
</dbReference>
<dbReference type="InterPro" id="IPR000795">
    <property type="entry name" value="T_Tr_GTP-bd_dom"/>
</dbReference>
<dbReference type="InterPro" id="IPR009000">
    <property type="entry name" value="Transl_B-barrel_sf"/>
</dbReference>
<dbReference type="InterPro" id="IPR004543">
    <property type="entry name" value="Transl_elong_EFG/EF2_arc"/>
</dbReference>
<dbReference type="InterPro" id="IPR005517">
    <property type="entry name" value="Transl_elong_EFG/EF2_IV"/>
</dbReference>
<dbReference type="NCBIfam" id="TIGR00490">
    <property type="entry name" value="aEF-2"/>
    <property type="match status" value="1"/>
</dbReference>
<dbReference type="NCBIfam" id="TIGR00231">
    <property type="entry name" value="small_GTP"/>
    <property type="match status" value="1"/>
</dbReference>
<dbReference type="PANTHER" id="PTHR42908:SF3">
    <property type="entry name" value="ELONGATION FACTOR-LIKE GTPASE 1"/>
    <property type="match status" value="1"/>
</dbReference>
<dbReference type="PANTHER" id="PTHR42908">
    <property type="entry name" value="TRANSLATION ELONGATION FACTOR-RELATED"/>
    <property type="match status" value="1"/>
</dbReference>
<dbReference type="Pfam" id="PF00679">
    <property type="entry name" value="EFG_C"/>
    <property type="match status" value="1"/>
</dbReference>
<dbReference type="Pfam" id="PF14492">
    <property type="entry name" value="EFG_III"/>
    <property type="match status" value="1"/>
</dbReference>
<dbReference type="Pfam" id="PF03764">
    <property type="entry name" value="EFG_IV"/>
    <property type="match status" value="1"/>
</dbReference>
<dbReference type="Pfam" id="PF00009">
    <property type="entry name" value="GTP_EFTU"/>
    <property type="match status" value="1"/>
</dbReference>
<dbReference type="Pfam" id="PF03144">
    <property type="entry name" value="GTP_EFTU_D2"/>
    <property type="match status" value="1"/>
</dbReference>
<dbReference type="PRINTS" id="PR00315">
    <property type="entry name" value="ELONGATNFCT"/>
</dbReference>
<dbReference type="SMART" id="SM00838">
    <property type="entry name" value="EFG_C"/>
    <property type="match status" value="1"/>
</dbReference>
<dbReference type="SMART" id="SM00889">
    <property type="entry name" value="EFG_IV"/>
    <property type="match status" value="1"/>
</dbReference>
<dbReference type="SUPFAM" id="SSF54980">
    <property type="entry name" value="EF-G C-terminal domain-like"/>
    <property type="match status" value="2"/>
</dbReference>
<dbReference type="SUPFAM" id="SSF52540">
    <property type="entry name" value="P-loop containing nucleoside triphosphate hydrolases"/>
    <property type="match status" value="1"/>
</dbReference>
<dbReference type="SUPFAM" id="SSF54211">
    <property type="entry name" value="Ribosomal protein S5 domain 2-like"/>
    <property type="match status" value="1"/>
</dbReference>
<dbReference type="SUPFAM" id="SSF50447">
    <property type="entry name" value="Translation proteins"/>
    <property type="match status" value="1"/>
</dbReference>
<dbReference type="PROSITE" id="PS00301">
    <property type="entry name" value="G_TR_1"/>
    <property type="match status" value="1"/>
</dbReference>
<dbReference type="PROSITE" id="PS51722">
    <property type="entry name" value="G_TR_2"/>
    <property type="match status" value="1"/>
</dbReference>
<protein>
    <recommendedName>
        <fullName evidence="1">Elongation factor 2</fullName>
        <shortName evidence="1">EF-2</shortName>
    </recommendedName>
</protein>
<keyword id="KW-0963">Cytoplasm</keyword>
<keyword id="KW-0251">Elongation factor</keyword>
<keyword id="KW-0342">GTP-binding</keyword>
<keyword id="KW-0547">Nucleotide-binding</keyword>
<keyword id="KW-0648">Protein biosynthesis</keyword>
<keyword id="KW-1185">Reference proteome</keyword>
<gene>
    <name evidence="1" type="primary">fusA</name>
    <name type="ordered locus">Kcr_0117</name>
</gene>
<sequence>MQKYKKVIDHLQELMRDPRNIRNIGIIAHVDHGKTTLSDNLLSAAGMISDKMAGEMRALDYHEIEQQRGITIKAANISLYYQRDGKEFAINLVDTPGHIDFTGHVTRSLRVIDGAIVVVDSVEEVMVQTETVTRQALEERVRPLLFINKIDRLIKELKLTPQEIQQKILRIIRDFNGLIEAYGEPEFREKWKVKWDNDSVAFGSALHGWGLTNSIAAKKGIRFSDIVDIYNEDPEGLALRRDIPVHEALLDMVALHVPDPIEAQSYRVERLWRDKQDEELFNALKNCDPNGPLIMGVNAVRIDPHAGIVVTGRVFSGTLREGEDVYLINAKKKQKIQQTSIYMGPYRMRMDEIPAGNIAAVLGLTSASSGETVVADAIKDRVISGFEAIRYVTEPVVTVSVEAKNPQDLPKLIDTLRKLTLQDPNLVMIHNQETGEILLKGTGELHLEISLYEVRKAGLEFDVSEPTVVYRESVRGTSDVVLAKSPNKLNRIWVTASPLNDEVVALIREGRVNERMDSRTLAKVLREEGKMDTEDARNVWTIDEENYNLFINRTVGVQRLDEVREILRQGFMWVMKEGPLAGEPVMGVAIRLVNAMIHEDPAHRGPAQLTPAVRKAIFGAMLSANPVLLEPIYEIQVSTPPELIGSVISLISQKRGKVVGIEERGRISIVKGFIPVRETLGGFSNEMRSMTSGRAFWQTKFSHWEPLPKSLMEQVALEIRRRKGMKEELPKAEEYMDTL</sequence>
<evidence type="ECO:0000255" key="1">
    <source>
        <dbReference type="HAMAP-Rule" id="MF_00054"/>
    </source>
</evidence>